<proteinExistence type="inferred from homology"/>
<reference evidence="7" key="1">
    <citation type="journal article" date="1998" name="Science">
        <title>Genome sequence of the nematode C. elegans: a platform for investigating biology.</title>
        <authorList>
            <consortium name="The C. elegans sequencing consortium"/>
        </authorList>
    </citation>
    <scope>NUCLEOTIDE SEQUENCE [LARGE SCALE GENOMIC DNA]</scope>
    <source>
        <strain evidence="7">Bristol N2</strain>
    </source>
</reference>
<reference evidence="6" key="2">
    <citation type="journal article" date="2013" name="PLoS ONE">
        <title>N-glycosylation is required for secretion and mitosis in C. elegans.</title>
        <authorList>
            <person name="Stevens J."/>
            <person name="Spang A."/>
        </authorList>
    </citation>
    <scope>SUBCELLULAR LOCATION</scope>
    <scope>DISRUPTION PHENOTYPE</scope>
</reference>
<gene>
    <name evidence="8" type="primary">ribo-1</name>
    <name evidence="8" type="ORF">T22D1.4</name>
</gene>
<comment type="function">
    <text evidence="1">Subunit of the oligosaccharyl transferase (OST) complex that catalyzes the initial transfer of a defined glycan (Glc(3)Man(9)GlcNAc(2) in eukaryotes) from the lipid carrier dolichol-pyrophosphate to an asparagine residue within an Asn-X-Ser/Thr consensus motif in nascent polypeptide chains, the first step in protein N-glycosylation. N-glycosylation occurs cotranslationally and the complex associates with the Sec61 complex at the channel-forming translocon complex that mediates protein translocation across the endoplasmic reticulum (ER). All subunits are required for a maximal enzyme activity.</text>
</comment>
<comment type="pathway">
    <text evidence="4">Protein modification; protein glycosylation.</text>
</comment>
<comment type="subunit">
    <text evidence="1">Component of the oligosaccharyltransferase (OST) complex.</text>
</comment>
<comment type="subcellular location">
    <subcellularLocation>
        <location evidence="4">Endoplasmic reticulum membrane</location>
        <topology evidence="4">Single-pass type I membrane protein</topology>
    </subcellularLocation>
    <subcellularLocation>
        <location evidence="5">Cytoplasmic granule</location>
    </subcellularLocation>
</comment>
<comment type="disruption phenotype">
    <text evidence="5">RNAi-mediated knock-down is mostly embryonic lethal (PubMed:23691084). Embryos exhibit cytokinesis defects which lead to arrest during development (PubMed:23691084). Embryogenesis proceeds more slowly and embryos are osmo-sensitive (PubMed:23691084). Defective localization of the yolk receptor rme-2 and impaired yolk secretion (PubMed:23691084). May result in chromosome segregation defects (PubMed:23691084).</text>
</comment>
<comment type="similarity">
    <text evidence="4">Belongs to the OST1 family.</text>
</comment>
<dbReference type="EMBL" id="FO080211">
    <property type="protein sequence ID" value="CCD62020.1"/>
    <property type="molecule type" value="Genomic_DNA"/>
</dbReference>
<dbReference type="PIR" id="T32708">
    <property type="entry name" value="T32708"/>
</dbReference>
<dbReference type="RefSeq" id="NP_501065.2">
    <property type="nucleotide sequence ID" value="NM_068664.7"/>
</dbReference>
<dbReference type="SMR" id="Q9GZH4"/>
<dbReference type="ComplexPortal" id="CPX-968">
    <property type="entry name" value="Oligosaccharyltransferase complex"/>
</dbReference>
<dbReference type="FunCoup" id="Q9GZH4">
    <property type="interactions" value="2704"/>
</dbReference>
<dbReference type="STRING" id="6239.T22D1.4.1"/>
<dbReference type="PaxDb" id="6239-T22D1.4"/>
<dbReference type="PeptideAtlas" id="Q9GZH4"/>
<dbReference type="EnsemblMetazoa" id="T22D1.4.1">
    <property type="protein sequence ID" value="T22D1.4.1"/>
    <property type="gene ID" value="WBGene00020683"/>
</dbReference>
<dbReference type="GeneID" id="177456"/>
<dbReference type="KEGG" id="cel:CELE_T22D1.4"/>
<dbReference type="UCSC" id="T22D1.4">
    <property type="organism name" value="c. elegans"/>
</dbReference>
<dbReference type="AGR" id="WB:WBGene00020683"/>
<dbReference type="CTD" id="177456"/>
<dbReference type="WormBase" id="T22D1.4">
    <property type="protein sequence ID" value="CE33704"/>
    <property type="gene ID" value="WBGene00020683"/>
    <property type="gene designation" value="ribo-1"/>
</dbReference>
<dbReference type="eggNOG" id="KOG2291">
    <property type="taxonomic scope" value="Eukaryota"/>
</dbReference>
<dbReference type="GeneTree" id="ENSGT00390000009630"/>
<dbReference type="HOGENOM" id="CLU_031381_2_0_1"/>
<dbReference type="InParanoid" id="Q9GZH4"/>
<dbReference type="OMA" id="RYEYARE"/>
<dbReference type="OrthoDB" id="310030at2759"/>
<dbReference type="PhylomeDB" id="Q9GZH4"/>
<dbReference type="UniPathway" id="UPA00378"/>
<dbReference type="PRO" id="PR:Q9GZH4"/>
<dbReference type="Proteomes" id="UP000001940">
    <property type="component" value="Chromosome IV"/>
</dbReference>
<dbReference type="Bgee" id="WBGene00020683">
    <property type="expression patterns" value="Expressed in embryo and 4 other cell types or tissues"/>
</dbReference>
<dbReference type="GO" id="GO:0008250">
    <property type="term" value="C:oligosaccharyltransferase complex"/>
    <property type="evidence" value="ECO:0000318"/>
    <property type="project" value="GO_Central"/>
</dbReference>
<dbReference type="GO" id="GO:0006487">
    <property type="term" value="P:protein N-linked glycosylation"/>
    <property type="evidence" value="ECO:0000303"/>
    <property type="project" value="ComplexPortal"/>
</dbReference>
<dbReference type="GO" id="GO:0018279">
    <property type="term" value="P:protein N-linked glycosylation via asparagine"/>
    <property type="evidence" value="ECO:0000318"/>
    <property type="project" value="GO_Central"/>
</dbReference>
<dbReference type="InterPro" id="IPR007676">
    <property type="entry name" value="Ribophorin_I"/>
</dbReference>
<dbReference type="PANTHER" id="PTHR21049:SF0">
    <property type="entry name" value="DOLICHYL-DIPHOSPHOOLIGOSACCHARIDE--PROTEIN GLYCOSYLTRANSFERASE SUBUNIT 1"/>
    <property type="match status" value="1"/>
</dbReference>
<dbReference type="PANTHER" id="PTHR21049">
    <property type="entry name" value="RIBOPHORIN I"/>
    <property type="match status" value="1"/>
</dbReference>
<dbReference type="Pfam" id="PF04597">
    <property type="entry name" value="Ribophorin_I"/>
    <property type="match status" value="1"/>
</dbReference>
<sequence>MRLLFAIALLGAVFAEDAWKAANVDRTIDATSQIVKVSTLYSFENVGNGPQSKVLIALSKEESATLSFISAGIDGSKGKLKISEKPAEKDLAVYEVDLRTPVAKGAKVTIRINLRITQVLEPLPSKIQQSDSQFVVLHTSAYVPSLYETVTQKTTIRTTQGGKLLSATTVSPSKQETERVIYGPYVNIPAFETKPVKVHYENNSPFVIATIVERFIEVSHWGNIAVEEYIELVHKGAELDGPFSRIDYQMDRRGRRQPALQQFTTVLPAQAKDIYYRDEIGNISTSAVRIRADSVDVEIRPRFPLFGGWKTSYVIGYNLPSEEYLYSKGNQYALKTKLFDHVFNDIVVEKLRTKVLLPEHVKRVKVATPYAVDRRPEELKPTYLDTTGRLVLVLEKENIVPDHSQFFTVTYEFEFVDMLREPLLASAFFFSLFFVIIVYSRFDFTISSDPAKDAEERSQIILGNLAKSVDSKQSAYEDLIEASQQYKSTKNDADLQEAKKTFIAARNQENSTLTDKIATLKTDSGASAAEKASELLKYDKTVFDAVDNYLKAVEKSTTKTAGTEEQQFLNKVKDARNRADSVLASI</sequence>
<protein>
    <recommendedName>
        <fullName evidence="4">Dolichyl-diphosphooligosaccharide--protein glycosyltransferase subunit 1</fullName>
    </recommendedName>
    <alternativeName>
        <fullName evidence="2">Ribophorin I</fullName>
        <shortName evidence="2">RPN-I</shortName>
    </alternativeName>
</protein>
<evidence type="ECO:0000250" key="1">
    <source>
        <dbReference type="UniProtKB" id="E2RQ08"/>
    </source>
</evidence>
<evidence type="ECO:0000250" key="2">
    <source>
        <dbReference type="UniProtKB" id="P04843"/>
    </source>
</evidence>
<evidence type="ECO:0000255" key="3"/>
<evidence type="ECO:0000255" key="4">
    <source>
        <dbReference type="RuleBase" id="RU361143"/>
    </source>
</evidence>
<evidence type="ECO:0000269" key="5">
    <source>
    </source>
</evidence>
<evidence type="ECO:0000305" key="6"/>
<evidence type="ECO:0000312" key="7">
    <source>
        <dbReference type="Proteomes" id="UP000001940"/>
    </source>
</evidence>
<evidence type="ECO:0000312" key="8">
    <source>
        <dbReference type="WormBase" id="T22D1.4"/>
    </source>
</evidence>
<accession>Q9GZH4</accession>
<organism evidence="7">
    <name type="scientific">Caenorhabditis elegans</name>
    <dbReference type="NCBI Taxonomy" id="6239"/>
    <lineage>
        <taxon>Eukaryota</taxon>
        <taxon>Metazoa</taxon>
        <taxon>Ecdysozoa</taxon>
        <taxon>Nematoda</taxon>
        <taxon>Chromadorea</taxon>
        <taxon>Rhabditida</taxon>
        <taxon>Rhabditina</taxon>
        <taxon>Rhabditomorpha</taxon>
        <taxon>Rhabditoidea</taxon>
        <taxon>Rhabditidae</taxon>
        <taxon>Peloderinae</taxon>
        <taxon>Caenorhabditis</taxon>
    </lineage>
</organism>
<feature type="signal peptide" evidence="3">
    <location>
        <begin position="1"/>
        <end position="15"/>
    </location>
</feature>
<feature type="chain" id="PRO_0000433511" description="Dolichyl-diphosphooligosaccharide--protein glycosyltransferase subunit 1">
    <location>
        <begin position="16"/>
        <end position="586"/>
    </location>
</feature>
<feature type="topological domain" description="Lumenal" evidence="6">
    <location>
        <begin position="16"/>
        <end position="421"/>
    </location>
</feature>
<feature type="transmembrane region" description="Helical" evidence="3">
    <location>
        <begin position="422"/>
        <end position="442"/>
    </location>
</feature>
<feature type="topological domain" description="Cytoplasmic" evidence="6">
    <location>
        <begin position="443"/>
        <end position="586"/>
    </location>
</feature>
<name>RPN1_CAEEL</name>
<keyword id="KW-0256">Endoplasmic reticulum</keyword>
<keyword id="KW-0472">Membrane</keyword>
<keyword id="KW-1185">Reference proteome</keyword>
<keyword id="KW-0732">Signal</keyword>
<keyword id="KW-0812">Transmembrane</keyword>
<keyword id="KW-1133">Transmembrane helix</keyword>